<gene>
    <name evidence="1" type="primary">hmgA</name>
    <name type="ordered locus">RPA4672</name>
</gene>
<dbReference type="EC" id="1.13.11.5" evidence="1"/>
<dbReference type="EMBL" id="BX572608">
    <property type="protein sequence ID" value="CAE30112.1"/>
    <property type="molecule type" value="Genomic_DNA"/>
</dbReference>
<dbReference type="RefSeq" id="WP_011160204.1">
    <property type="nucleotide sequence ID" value="NZ_CP116810.1"/>
</dbReference>
<dbReference type="SMR" id="Q6N0T9"/>
<dbReference type="STRING" id="258594.RPA4672"/>
<dbReference type="GeneID" id="66895830"/>
<dbReference type="eggNOG" id="COG3508">
    <property type="taxonomic scope" value="Bacteria"/>
</dbReference>
<dbReference type="HOGENOM" id="CLU_027174_0_0_5"/>
<dbReference type="PhylomeDB" id="Q6N0T9"/>
<dbReference type="UniPathway" id="UPA00139">
    <property type="reaction ID" value="UER00339"/>
</dbReference>
<dbReference type="GO" id="GO:0005737">
    <property type="term" value="C:cytoplasm"/>
    <property type="evidence" value="ECO:0007669"/>
    <property type="project" value="TreeGrafter"/>
</dbReference>
<dbReference type="GO" id="GO:0004411">
    <property type="term" value="F:homogentisate 1,2-dioxygenase activity"/>
    <property type="evidence" value="ECO:0007669"/>
    <property type="project" value="UniProtKB-UniRule"/>
</dbReference>
<dbReference type="GO" id="GO:0005506">
    <property type="term" value="F:iron ion binding"/>
    <property type="evidence" value="ECO:0007669"/>
    <property type="project" value="UniProtKB-UniRule"/>
</dbReference>
<dbReference type="GO" id="GO:0006559">
    <property type="term" value="P:L-phenylalanine catabolic process"/>
    <property type="evidence" value="ECO:0007669"/>
    <property type="project" value="UniProtKB-UniRule"/>
</dbReference>
<dbReference type="GO" id="GO:0006572">
    <property type="term" value="P:tyrosine catabolic process"/>
    <property type="evidence" value="ECO:0007669"/>
    <property type="project" value="UniProtKB-UniRule"/>
</dbReference>
<dbReference type="CDD" id="cd07000">
    <property type="entry name" value="cupin_HGO_N"/>
    <property type="match status" value="1"/>
</dbReference>
<dbReference type="FunFam" id="2.60.120.10:FF:000053">
    <property type="entry name" value="Homogentisate 1,2-dioxygenase"/>
    <property type="match status" value="1"/>
</dbReference>
<dbReference type="Gene3D" id="2.60.120.10">
    <property type="entry name" value="Jelly Rolls"/>
    <property type="match status" value="1"/>
</dbReference>
<dbReference type="HAMAP" id="MF_00334">
    <property type="entry name" value="Homogentis_dioxygen"/>
    <property type="match status" value="1"/>
</dbReference>
<dbReference type="InterPro" id="IPR046451">
    <property type="entry name" value="HgmA_C"/>
</dbReference>
<dbReference type="InterPro" id="IPR046452">
    <property type="entry name" value="HgmA_N"/>
</dbReference>
<dbReference type="InterPro" id="IPR005708">
    <property type="entry name" value="Homogentis_dOase"/>
</dbReference>
<dbReference type="InterPro" id="IPR022950">
    <property type="entry name" value="Homogentis_dOase_bac"/>
</dbReference>
<dbReference type="InterPro" id="IPR014710">
    <property type="entry name" value="RmlC-like_jellyroll"/>
</dbReference>
<dbReference type="InterPro" id="IPR011051">
    <property type="entry name" value="RmlC_Cupin_sf"/>
</dbReference>
<dbReference type="NCBIfam" id="TIGR01015">
    <property type="entry name" value="hmgA"/>
    <property type="match status" value="1"/>
</dbReference>
<dbReference type="PANTHER" id="PTHR11056">
    <property type="entry name" value="HOMOGENTISATE 1,2-DIOXYGENASE"/>
    <property type="match status" value="1"/>
</dbReference>
<dbReference type="PANTHER" id="PTHR11056:SF0">
    <property type="entry name" value="HOMOGENTISATE 1,2-DIOXYGENASE"/>
    <property type="match status" value="1"/>
</dbReference>
<dbReference type="Pfam" id="PF04209">
    <property type="entry name" value="HgmA_C"/>
    <property type="match status" value="1"/>
</dbReference>
<dbReference type="Pfam" id="PF20510">
    <property type="entry name" value="HgmA_N"/>
    <property type="match status" value="1"/>
</dbReference>
<dbReference type="SUPFAM" id="SSF51182">
    <property type="entry name" value="RmlC-like cupins"/>
    <property type="match status" value="1"/>
</dbReference>
<comment type="function">
    <text evidence="1">Involved in the catabolism of homogentisate (2,5-dihydroxyphenylacetate or 2,5-OH-PhAc), a central intermediate in the degradation of phenylalanine and tyrosine. Catalyzes the oxidative ring cleavage of the aromatic ring of homogentisate to yield maleylacetoacetate.</text>
</comment>
<comment type="catalytic activity">
    <reaction evidence="1">
        <text>homogentisate + O2 = 4-maleylacetoacetate + H(+)</text>
        <dbReference type="Rhea" id="RHEA:15449"/>
        <dbReference type="ChEBI" id="CHEBI:15378"/>
        <dbReference type="ChEBI" id="CHEBI:15379"/>
        <dbReference type="ChEBI" id="CHEBI:16169"/>
        <dbReference type="ChEBI" id="CHEBI:17105"/>
        <dbReference type="EC" id="1.13.11.5"/>
    </reaction>
</comment>
<comment type="cofactor">
    <cofactor evidence="1">
        <name>Fe cation</name>
        <dbReference type="ChEBI" id="CHEBI:24875"/>
    </cofactor>
</comment>
<comment type="pathway">
    <text evidence="1">Amino-acid degradation; L-phenylalanine degradation; acetoacetate and fumarate from L-phenylalanine: step 4/6.</text>
</comment>
<comment type="subunit">
    <text evidence="1">Hexamer; dimer of trimers.</text>
</comment>
<comment type="similarity">
    <text evidence="1">Belongs to the homogentisate dioxygenase family.</text>
</comment>
<accession>Q6N0T9</accession>
<proteinExistence type="inferred from homology"/>
<keyword id="KW-0223">Dioxygenase</keyword>
<keyword id="KW-0408">Iron</keyword>
<keyword id="KW-0479">Metal-binding</keyword>
<keyword id="KW-0560">Oxidoreductase</keyword>
<keyword id="KW-0585">Phenylalanine catabolism</keyword>
<keyword id="KW-0828">Tyrosine catabolism</keyword>
<protein>
    <recommendedName>
        <fullName evidence="1">Homogentisate 1,2-dioxygenase</fullName>
        <shortName evidence="1">HGDO</shortName>
        <ecNumber evidence="1">1.13.11.5</ecNumber>
    </recommendedName>
    <alternativeName>
        <fullName evidence="1">Homogentisate oxygenase</fullName>
    </alternativeName>
    <alternativeName>
        <fullName evidence="1">Homogentisic acid oxidase</fullName>
    </alternativeName>
    <alternativeName>
        <fullName evidence="1">Homogentisicase</fullName>
    </alternativeName>
</protein>
<name>HGD_RHOPA</name>
<reference key="1">
    <citation type="journal article" date="2004" name="Nat. Biotechnol.">
        <title>Complete genome sequence of the metabolically versatile photosynthetic bacterium Rhodopseudomonas palustris.</title>
        <authorList>
            <person name="Larimer F.W."/>
            <person name="Chain P."/>
            <person name="Hauser L."/>
            <person name="Lamerdin J.E."/>
            <person name="Malfatti S."/>
            <person name="Do L."/>
            <person name="Land M.L."/>
            <person name="Pelletier D.A."/>
            <person name="Beatty J.T."/>
            <person name="Lang A.S."/>
            <person name="Tabita F.R."/>
            <person name="Gibson J.L."/>
            <person name="Hanson T.E."/>
            <person name="Bobst C."/>
            <person name="Torres y Torres J.L."/>
            <person name="Peres C."/>
            <person name="Harrison F.H."/>
            <person name="Gibson J."/>
            <person name="Harwood C.S."/>
        </authorList>
    </citation>
    <scope>NUCLEOTIDE SEQUENCE [LARGE SCALE GENOMIC DNA]</scope>
    <source>
        <strain>ATCC BAA-98 / CGA009</strain>
    </source>
</reference>
<organism>
    <name type="scientific">Rhodopseudomonas palustris (strain ATCC BAA-98 / CGA009)</name>
    <dbReference type="NCBI Taxonomy" id="258594"/>
    <lineage>
        <taxon>Bacteria</taxon>
        <taxon>Pseudomonadati</taxon>
        <taxon>Pseudomonadota</taxon>
        <taxon>Alphaproteobacteria</taxon>
        <taxon>Hyphomicrobiales</taxon>
        <taxon>Nitrobacteraceae</taxon>
        <taxon>Rhodopseudomonas</taxon>
    </lineage>
</organism>
<evidence type="ECO:0000255" key="1">
    <source>
        <dbReference type="HAMAP-Rule" id="MF_00334"/>
    </source>
</evidence>
<feature type="chain" id="PRO_0000225795" description="Homogentisate 1,2-dioxygenase">
    <location>
        <begin position="1"/>
        <end position="448"/>
    </location>
</feature>
<feature type="active site" description="Proton acceptor" evidence="1">
    <location>
        <position position="303"/>
    </location>
</feature>
<feature type="binding site" evidence="1">
    <location>
        <position position="346"/>
    </location>
    <ligand>
        <name>Fe cation</name>
        <dbReference type="ChEBI" id="CHEBI:24875"/>
    </ligand>
</feature>
<feature type="binding site" evidence="1">
    <location>
        <position position="352"/>
    </location>
    <ligand>
        <name>Fe cation</name>
        <dbReference type="ChEBI" id="CHEBI:24875"/>
    </ligand>
</feature>
<feature type="binding site" evidence="1">
    <location>
        <position position="361"/>
    </location>
    <ligand>
        <name>homogentisate</name>
        <dbReference type="ChEBI" id="CHEBI:16169"/>
    </ligand>
</feature>
<feature type="binding site" evidence="1">
    <location>
        <position position="382"/>
    </location>
    <ligand>
        <name>Fe cation</name>
        <dbReference type="ChEBI" id="CHEBI:24875"/>
    </ligand>
</feature>
<feature type="binding site" evidence="1">
    <location>
        <position position="382"/>
    </location>
    <ligand>
        <name>homogentisate</name>
        <dbReference type="ChEBI" id="CHEBI:16169"/>
    </ligand>
</feature>
<sequence>MNINAAPQILGRSSQDITPGYMSGFGNSFETEALPGALPVGRNSPQRCAYGLYAEQLSGSPFTAPRGANERSWLYRIRPSVKHSGRFAKTDMGLWRSAPCFEHDLPIAQLRWDPPPMPQEALTFLQGVRTMTTAGDVNTQAGMATHLYLITQSMVDQHFYNADGEMMFVPQQGSLRLVTEFGIITIEPAEIAVIPRGVKFRVELVDGPARGYLCENYGGAFTLPERGPIGANCLANSRDFLTPVAAYEDKDTPTELYVKWGGSLYVTKLPHSPIDVVAWHGNYAPYKYDLRTYSPVGAIGFDHPDPSIFTVLTSPSETPGTANIDFVIFPERWMVADNTFRPPWYHMNIMSEFMGLIYGVYDAKPQGFVPGGASLHNMMLPHGPDREAFDHASNGELKPVKLTGTMAFMFETRYPQRVTEYAASSGLLQDDYADCWNGLEKRFDPNRP</sequence>